<organism>
    <name type="scientific">Nicotiana tabacum</name>
    <name type="common">Common tobacco</name>
    <dbReference type="NCBI Taxonomy" id="4097"/>
    <lineage>
        <taxon>Eukaryota</taxon>
        <taxon>Viridiplantae</taxon>
        <taxon>Streptophyta</taxon>
        <taxon>Embryophyta</taxon>
        <taxon>Tracheophyta</taxon>
        <taxon>Spermatophyta</taxon>
        <taxon>Magnoliopsida</taxon>
        <taxon>eudicotyledons</taxon>
        <taxon>Gunneridae</taxon>
        <taxon>Pentapetalae</taxon>
        <taxon>asterids</taxon>
        <taxon>lamiids</taxon>
        <taxon>Solanales</taxon>
        <taxon>Solanaceae</taxon>
        <taxon>Nicotianoideae</taxon>
        <taxon>Nicotianeae</taxon>
        <taxon>Nicotiana</taxon>
    </lineage>
</organism>
<proteinExistence type="evidence at transcript level"/>
<evidence type="ECO:0000255" key="1">
    <source>
        <dbReference type="PROSITE-ProRule" id="PRU00251"/>
    </source>
</evidence>
<evidence type="ECO:0000255" key="2">
    <source>
        <dbReference type="PROSITE-ProRule" id="PRU00629"/>
    </source>
</evidence>
<feature type="chain" id="PRO_0000199456" description="Floral homeotic protein GLOBOSA">
    <location>
        <begin position="1"/>
        <end position="209"/>
    </location>
</feature>
<feature type="domain" description="MADS-box" evidence="1">
    <location>
        <begin position="3"/>
        <end position="57"/>
    </location>
</feature>
<feature type="domain" description="K-box" evidence="2">
    <location>
        <begin position="82"/>
        <end position="173"/>
    </location>
</feature>
<sequence length="209" mass="24691">MGRGKIEIKRIENSSNRQVTYSKRRNGILKKAKEISVLCDARVSVIIFASSGKMHEFSSTSLVDILDQYHKLTGRRLWDAKHENLDNEINKVKKDNDNMQIELRHLKGEDITSLNHRELMMLEDALDNGLTSIRNKQNDLLRMMRKKTQSMEEEQDQLNWQLRQLEIASMNRNMGEIGEVFHQRENEYQTQMPFAFRVQPMQPNLQERF</sequence>
<keyword id="KW-0010">Activator</keyword>
<keyword id="KW-0217">Developmental protein</keyword>
<keyword id="KW-0238">DNA-binding</keyword>
<keyword id="KW-0539">Nucleus</keyword>
<keyword id="KW-1185">Reference proteome</keyword>
<keyword id="KW-0804">Transcription</keyword>
<keyword id="KW-0805">Transcription regulation</keyword>
<comment type="function">
    <text>Transcription factor involved in the genetic control of flower development. Acts in conjunction with DEFICIENS (defA).</text>
</comment>
<comment type="subcellular location">
    <subcellularLocation>
        <location>Nucleus</location>
    </subcellularLocation>
</comment>
<comment type="tissue specificity">
    <text>Expressed mainly in floral organs and, within the flower, expression is restricted to petals and stamens.</text>
</comment>
<comment type="miscellaneous">
    <text>Mutations in Glo cause transformation of petals into sepals and stamina into carpels.</text>
</comment>
<dbReference type="EMBL" id="X67959">
    <property type="protein sequence ID" value="CAA48142.1"/>
    <property type="molecule type" value="mRNA"/>
</dbReference>
<dbReference type="PIR" id="S35226">
    <property type="entry name" value="S35226"/>
</dbReference>
<dbReference type="RefSeq" id="NP_001313154.1">
    <property type="nucleotide sequence ID" value="NM_001326225.1"/>
</dbReference>
<dbReference type="SMR" id="Q03416"/>
<dbReference type="STRING" id="4097.Q03416"/>
<dbReference type="PaxDb" id="4097-Q03416"/>
<dbReference type="GeneID" id="107829524"/>
<dbReference type="KEGG" id="nta:107829524"/>
<dbReference type="OMA" id="NTYLHTH"/>
<dbReference type="OrthoDB" id="1898716at2759"/>
<dbReference type="Proteomes" id="UP000084051">
    <property type="component" value="Unplaced"/>
</dbReference>
<dbReference type="GO" id="GO:0005634">
    <property type="term" value="C:nucleus"/>
    <property type="evidence" value="ECO:0007669"/>
    <property type="project" value="UniProtKB-SubCell"/>
</dbReference>
<dbReference type="GO" id="GO:0000981">
    <property type="term" value="F:DNA-binding transcription factor activity, RNA polymerase II-specific"/>
    <property type="evidence" value="ECO:0000318"/>
    <property type="project" value="GO_Central"/>
</dbReference>
<dbReference type="GO" id="GO:0046983">
    <property type="term" value="F:protein dimerization activity"/>
    <property type="evidence" value="ECO:0007669"/>
    <property type="project" value="InterPro"/>
</dbReference>
<dbReference type="GO" id="GO:0000978">
    <property type="term" value="F:RNA polymerase II cis-regulatory region sequence-specific DNA binding"/>
    <property type="evidence" value="ECO:0000318"/>
    <property type="project" value="GO_Central"/>
</dbReference>
<dbReference type="GO" id="GO:0045944">
    <property type="term" value="P:positive regulation of transcription by RNA polymerase II"/>
    <property type="evidence" value="ECO:0007669"/>
    <property type="project" value="InterPro"/>
</dbReference>
<dbReference type="GO" id="GO:0006357">
    <property type="term" value="P:regulation of transcription by RNA polymerase II"/>
    <property type="evidence" value="ECO:0000318"/>
    <property type="project" value="GO_Central"/>
</dbReference>
<dbReference type="CDD" id="cd00265">
    <property type="entry name" value="MADS_MEF2_like"/>
    <property type="match status" value="1"/>
</dbReference>
<dbReference type="Gene3D" id="3.40.1810.10">
    <property type="entry name" value="Transcription factor, MADS-box"/>
    <property type="match status" value="1"/>
</dbReference>
<dbReference type="InterPro" id="IPR050142">
    <property type="entry name" value="MADS-box/MEF2_TF"/>
</dbReference>
<dbReference type="InterPro" id="IPR033896">
    <property type="entry name" value="MEF2-like_N"/>
</dbReference>
<dbReference type="InterPro" id="IPR002487">
    <property type="entry name" value="TF_Kbox"/>
</dbReference>
<dbReference type="InterPro" id="IPR002100">
    <property type="entry name" value="TF_MADSbox"/>
</dbReference>
<dbReference type="InterPro" id="IPR036879">
    <property type="entry name" value="TF_MADSbox_sf"/>
</dbReference>
<dbReference type="PANTHER" id="PTHR48019">
    <property type="entry name" value="SERUM RESPONSE FACTOR HOMOLOG"/>
    <property type="match status" value="1"/>
</dbReference>
<dbReference type="Pfam" id="PF01486">
    <property type="entry name" value="K-box"/>
    <property type="match status" value="1"/>
</dbReference>
<dbReference type="Pfam" id="PF00319">
    <property type="entry name" value="SRF-TF"/>
    <property type="match status" value="1"/>
</dbReference>
<dbReference type="PRINTS" id="PR00404">
    <property type="entry name" value="MADSDOMAIN"/>
</dbReference>
<dbReference type="SMART" id="SM00432">
    <property type="entry name" value="MADS"/>
    <property type="match status" value="1"/>
</dbReference>
<dbReference type="SUPFAM" id="SSF55455">
    <property type="entry name" value="SRF-like"/>
    <property type="match status" value="1"/>
</dbReference>
<dbReference type="PROSITE" id="PS51297">
    <property type="entry name" value="K_BOX"/>
    <property type="match status" value="1"/>
</dbReference>
<dbReference type="PROSITE" id="PS00350">
    <property type="entry name" value="MADS_BOX_1"/>
    <property type="match status" value="1"/>
</dbReference>
<dbReference type="PROSITE" id="PS50066">
    <property type="entry name" value="MADS_BOX_2"/>
    <property type="match status" value="1"/>
</dbReference>
<protein>
    <recommendedName>
        <fullName>Floral homeotic protein GLOBOSA</fullName>
    </recommendedName>
</protein>
<gene>
    <name type="primary">GLO</name>
</gene>
<reference key="1">
    <citation type="journal article" date="1993" name="Mol. Gen. Genet.">
        <title>NTGLO: a tobacco homologue of the GLOBOSA floral homeotic gene of Antirrhinum majus: cDNA sequence and expression pattern.</title>
        <authorList>
            <person name="Hansen G."/>
            <person name="Estruch J.J."/>
            <person name="Sommer H."/>
            <person name="Spena A."/>
        </authorList>
    </citation>
    <scope>NUCLEOTIDE SEQUENCE [MRNA]</scope>
    <source>
        <strain>cv. SR1</strain>
        <tissue>Flower</tissue>
    </source>
</reference>
<name>GLOB_TOBAC</name>
<accession>Q03416</accession>